<gene>
    <name evidence="1" type="primary">tsaC</name>
    <name type="synonym">rimN</name>
    <name type="ordered locus">SBO_3276</name>
</gene>
<sequence>MNNNLQGDAIAAAIDVLNEERVIAYPTEAVFGVGCDPDSETAVMRLLELKQRPVDKGLILIAANYEQLKPYIDDTMLTDAQRETIFSRWPGPVTFVFPAPATTPRWLTGRFDSLAVRVTDHPLVVALCQAYGKPLVSTSANLSGLPPCRTVDEVRAQFGAAFPVVLGETGGRLNPSEIRDALTGELFRQG</sequence>
<evidence type="ECO:0000255" key="1">
    <source>
        <dbReference type="HAMAP-Rule" id="MF_01852"/>
    </source>
</evidence>
<reference key="1">
    <citation type="journal article" date="2005" name="Nucleic Acids Res.">
        <title>Genome dynamics and diversity of Shigella species, the etiologic agents of bacillary dysentery.</title>
        <authorList>
            <person name="Yang F."/>
            <person name="Yang J."/>
            <person name="Zhang X."/>
            <person name="Chen L."/>
            <person name="Jiang Y."/>
            <person name="Yan Y."/>
            <person name="Tang X."/>
            <person name="Wang J."/>
            <person name="Xiong Z."/>
            <person name="Dong J."/>
            <person name="Xue Y."/>
            <person name="Zhu Y."/>
            <person name="Xu X."/>
            <person name="Sun L."/>
            <person name="Chen S."/>
            <person name="Nie H."/>
            <person name="Peng J."/>
            <person name="Xu J."/>
            <person name="Wang Y."/>
            <person name="Yuan Z."/>
            <person name="Wen Y."/>
            <person name="Yao Z."/>
            <person name="Shen Y."/>
            <person name="Qiang B."/>
            <person name="Hou Y."/>
            <person name="Yu J."/>
            <person name="Jin Q."/>
        </authorList>
    </citation>
    <scope>NUCLEOTIDE SEQUENCE [LARGE SCALE GENOMIC DNA]</scope>
    <source>
        <strain>Sb227</strain>
    </source>
</reference>
<accession>Q31VZ4</accession>
<comment type="function">
    <text evidence="1">Required for the formation of a threonylcarbamoyl group on adenosine at position 37 (t(6)A37) in tRNAs that read codons beginning with adenine. Catalyzes the conversion of L-threonine, HCO(3)(-)/CO(2) and ATP to give threonylcarbamoyl-AMP (TC-AMP) as the acyladenylate intermediate, with the release of diphosphate.</text>
</comment>
<comment type="catalytic activity">
    <reaction evidence="1">
        <text>L-threonine + hydrogencarbonate + ATP = L-threonylcarbamoyladenylate + diphosphate + H2O</text>
        <dbReference type="Rhea" id="RHEA:36407"/>
        <dbReference type="ChEBI" id="CHEBI:15377"/>
        <dbReference type="ChEBI" id="CHEBI:17544"/>
        <dbReference type="ChEBI" id="CHEBI:30616"/>
        <dbReference type="ChEBI" id="CHEBI:33019"/>
        <dbReference type="ChEBI" id="CHEBI:57926"/>
        <dbReference type="ChEBI" id="CHEBI:73682"/>
        <dbReference type="EC" id="2.7.7.87"/>
    </reaction>
</comment>
<comment type="subcellular location">
    <subcellularLocation>
        <location evidence="1">Cytoplasm</location>
    </subcellularLocation>
</comment>
<comment type="similarity">
    <text evidence="1">Belongs to the SUA5 family. TsaC subfamily.</text>
</comment>
<keyword id="KW-0067">ATP-binding</keyword>
<keyword id="KW-0963">Cytoplasm</keyword>
<keyword id="KW-0547">Nucleotide-binding</keyword>
<keyword id="KW-0548">Nucleotidyltransferase</keyword>
<keyword id="KW-0808">Transferase</keyword>
<keyword id="KW-0819">tRNA processing</keyword>
<proteinExistence type="inferred from homology"/>
<feature type="chain" id="PRO_0000352992" description="Threonylcarbamoyl-AMP synthase">
    <location>
        <begin position="1"/>
        <end position="190"/>
    </location>
</feature>
<feature type="domain" description="YrdC-like" evidence="1">
    <location>
        <begin position="7"/>
        <end position="190"/>
    </location>
</feature>
<dbReference type="EC" id="2.7.7.87" evidence="1"/>
<dbReference type="EMBL" id="CP000036">
    <property type="protein sequence ID" value="ABB67764.1"/>
    <property type="molecule type" value="Genomic_DNA"/>
</dbReference>
<dbReference type="RefSeq" id="WP_004986893.1">
    <property type="nucleotide sequence ID" value="NC_007613.1"/>
</dbReference>
<dbReference type="SMR" id="Q31VZ4"/>
<dbReference type="KEGG" id="sbo:SBO_3276"/>
<dbReference type="HOGENOM" id="CLU_031397_6_0_6"/>
<dbReference type="Proteomes" id="UP000007067">
    <property type="component" value="Chromosome"/>
</dbReference>
<dbReference type="GO" id="GO:0005737">
    <property type="term" value="C:cytoplasm"/>
    <property type="evidence" value="ECO:0007669"/>
    <property type="project" value="UniProtKB-SubCell"/>
</dbReference>
<dbReference type="GO" id="GO:0005524">
    <property type="term" value="F:ATP binding"/>
    <property type="evidence" value="ECO:0007669"/>
    <property type="project" value="UniProtKB-UniRule"/>
</dbReference>
<dbReference type="GO" id="GO:0003725">
    <property type="term" value="F:double-stranded RNA binding"/>
    <property type="evidence" value="ECO:0007669"/>
    <property type="project" value="InterPro"/>
</dbReference>
<dbReference type="GO" id="GO:0061710">
    <property type="term" value="F:L-threonylcarbamoyladenylate synthase"/>
    <property type="evidence" value="ECO:0007669"/>
    <property type="project" value="UniProtKB-EC"/>
</dbReference>
<dbReference type="GO" id="GO:0000049">
    <property type="term" value="F:tRNA binding"/>
    <property type="evidence" value="ECO:0007669"/>
    <property type="project" value="TreeGrafter"/>
</dbReference>
<dbReference type="GO" id="GO:0006450">
    <property type="term" value="P:regulation of translational fidelity"/>
    <property type="evidence" value="ECO:0007669"/>
    <property type="project" value="TreeGrafter"/>
</dbReference>
<dbReference type="GO" id="GO:0002949">
    <property type="term" value="P:tRNA threonylcarbamoyladenosine modification"/>
    <property type="evidence" value="ECO:0007669"/>
    <property type="project" value="UniProtKB-UniRule"/>
</dbReference>
<dbReference type="FunFam" id="3.90.870.10:FF:000004">
    <property type="entry name" value="Threonylcarbamoyl-AMP synthase"/>
    <property type="match status" value="1"/>
</dbReference>
<dbReference type="Gene3D" id="3.90.870.10">
    <property type="entry name" value="DHBP synthase"/>
    <property type="match status" value="1"/>
</dbReference>
<dbReference type="HAMAP" id="MF_01852">
    <property type="entry name" value="TsaC"/>
    <property type="match status" value="1"/>
</dbReference>
<dbReference type="InterPro" id="IPR017945">
    <property type="entry name" value="DHBP_synth_RibB-like_a/b_dom"/>
</dbReference>
<dbReference type="InterPro" id="IPR006070">
    <property type="entry name" value="Sua5-like_dom"/>
</dbReference>
<dbReference type="InterPro" id="IPR023535">
    <property type="entry name" value="TC-AMP_synthase"/>
</dbReference>
<dbReference type="InterPro" id="IPR050156">
    <property type="entry name" value="TC-AMP_synthase_SUA5"/>
</dbReference>
<dbReference type="NCBIfam" id="NF007919">
    <property type="entry name" value="PRK10634.1"/>
    <property type="match status" value="1"/>
</dbReference>
<dbReference type="PANTHER" id="PTHR17490">
    <property type="entry name" value="SUA5"/>
    <property type="match status" value="1"/>
</dbReference>
<dbReference type="PANTHER" id="PTHR17490:SF18">
    <property type="entry name" value="THREONYLCARBAMOYL-AMP SYNTHASE"/>
    <property type="match status" value="1"/>
</dbReference>
<dbReference type="Pfam" id="PF01300">
    <property type="entry name" value="Sua5_yciO_yrdC"/>
    <property type="match status" value="1"/>
</dbReference>
<dbReference type="SUPFAM" id="SSF55821">
    <property type="entry name" value="YrdC/RibB"/>
    <property type="match status" value="1"/>
</dbReference>
<dbReference type="PROSITE" id="PS51163">
    <property type="entry name" value="YRDC"/>
    <property type="match status" value="1"/>
</dbReference>
<organism>
    <name type="scientific">Shigella boydii serotype 4 (strain Sb227)</name>
    <dbReference type="NCBI Taxonomy" id="300268"/>
    <lineage>
        <taxon>Bacteria</taxon>
        <taxon>Pseudomonadati</taxon>
        <taxon>Pseudomonadota</taxon>
        <taxon>Gammaproteobacteria</taxon>
        <taxon>Enterobacterales</taxon>
        <taxon>Enterobacteriaceae</taxon>
        <taxon>Shigella</taxon>
    </lineage>
</organism>
<name>TSAC_SHIBS</name>
<protein>
    <recommendedName>
        <fullName evidence="1">Threonylcarbamoyl-AMP synthase</fullName>
        <shortName evidence="1">TC-AMP synthase</shortName>
        <ecNumber evidence="1">2.7.7.87</ecNumber>
    </recommendedName>
    <alternativeName>
        <fullName evidence="1">L-threonylcarbamoyladenylate synthase</fullName>
    </alternativeName>
    <alternativeName>
        <fullName evidence="1">t(6)A37 threonylcarbamoyladenosine biosynthesis protein TsaC</fullName>
    </alternativeName>
    <alternativeName>
        <fullName evidence="1">tRNA threonylcarbamoyladenosine biosynthesis protein TsaC</fullName>
    </alternativeName>
</protein>